<accession>A3QJG1</accession>
<dbReference type="EC" id="4.1.3.40" evidence="1"/>
<dbReference type="EMBL" id="CP000606">
    <property type="protein sequence ID" value="ABO25609.1"/>
    <property type="molecule type" value="Genomic_DNA"/>
</dbReference>
<dbReference type="RefSeq" id="WP_011867537.1">
    <property type="nucleotide sequence ID" value="NC_009092.1"/>
</dbReference>
<dbReference type="SMR" id="A3QJG1"/>
<dbReference type="STRING" id="323850.Shew_3743"/>
<dbReference type="KEGG" id="slo:Shew_3743"/>
<dbReference type="eggNOG" id="COG3161">
    <property type="taxonomic scope" value="Bacteria"/>
</dbReference>
<dbReference type="HOGENOM" id="CLU_096824_1_1_6"/>
<dbReference type="OrthoDB" id="9789493at2"/>
<dbReference type="UniPathway" id="UPA00232"/>
<dbReference type="Proteomes" id="UP000001558">
    <property type="component" value="Chromosome"/>
</dbReference>
<dbReference type="GO" id="GO:0005829">
    <property type="term" value="C:cytosol"/>
    <property type="evidence" value="ECO:0007669"/>
    <property type="project" value="TreeGrafter"/>
</dbReference>
<dbReference type="GO" id="GO:0008813">
    <property type="term" value="F:chorismate lyase activity"/>
    <property type="evidence" value="ECO:0007669"/>
    <property type="project" value="UniProtKB-UniRule"/>
</dbReference>
<dbReference type="GO" id="GO:0042866">
    <property type="term" value="P:pyruvate biosynthetic process"/>
    <property type="evidence" value="ECO:0007669"/>
    <property type="project" value="UniProtKB-UniRule"/>
</dbReference>
<dbReference type="GO" id="GO:0006744">
    <property type="term" value="P:ubiquinone biosynthetic process"/>
    <property type="evidence" value="ECO:0007669"/>
    <property type="project" value="UniProtKB-UniRule"/>
</dbReference>
<dbReference type="Gene3D" id="3.40.1410.10">
    <property type="entry name" value="Chorismate lyase-like"/>
    <property type="match status" value="1"/>
</dbReference>
<dbReference type="HAMAP" id="MF_01632">
    <property type="entry name" value="UbiC"/>
    <property type="match status" value="1"/>
</dbReference>
<dbReference type="InterPro" id="IPR007440">
    <property type="entry name" value="Chorismate--pyruvate_lyase"/>
</dbReference>
<dbReference type="InterPro" id="IPR028978">
    <property type="entry name" value="Chorismate_lyase_/UTRA_dom_sf"/>
</dbReference>
<dbReference type="PANTHER" id="PTHR38683">
    <property type="entry name" value="CHORISMATE PYRUVATE-LYASE"/>
    <property type="match status" value="1"/>
</dbReference>
<dbReference type="PANTHER" id="PTHR38683:SF1">
    <property type="entry name" value="CHORISMATE PYRUVATE-LYASE"/>
    <property type="match status" value="1"/>
</dbReference>
<dbReference type="Pfam" id="PF04345">
    <property type="entry name" value="Chor_lyase"/>
    <property type="match status" value="1"/>
</dbReference>
<dbReference type="SUPFAM" id="SSF64288">
    <property type="entry name" value="Chorismate lyase-like"/>
    <property type="match status" value="1"/>
</dbReference>
<reference key="1">
    <citation type="submission" date="2007-03" db="EMBL/GenBank/DDBJ databases">
        <title>Complete sequence of Shewanella loihica PV-4.</title>
        <authorList>
            <consortium name="US DOE Joint Genome Institute"/>
            <person name="Copeland A."/>
            <person name="Lucas S."/>
            <person name="Lapidus A."/>
            <person name="Barry K."/>
            <person name="Detter J.C."/>
            <person name="Glavina del Rio T."/>
            <person name="Hammon N."/>
            <person name="Israni S."/>
            <person name="Dalin E."/>
            <person name="Tice H."/>
            <person name="Pitluck S."/>
            <person name="Chain P."/>
            <person name="Malfatti S."/>
            <person name="Shin M."/>
            <person name="Vergez L."/>
            <person name="Schmutz J."/>
            <person name="Larimer F."/>
            <person name="Land M."/>
            <person name="Hauser L."/>
            <person name="Kyrpides N."/>
            <person name="Mikhailova N."/>
            <person name="Romine M.F."/>
            <person name="Serres G."/>
            <person name="Fredrickson J."/>
            <person name="Tiedje J."/>
            <person name="Richardson P."/>
        </authorList>
    </citation>
    <scope>NUCLEOTIDE SEQUENCE [LARGE SCALE GENOMIC DNA]</scope>
    <source>
        <strain>ATCC BAA-1088 / PV-4</strain>
    </source>
</reference>
<comment type="function">
    <text evidence="1">Removes the pyruvyl group from chorismate, with concomitant aromatization of the ring, to provide 4-hydroxybenzoate (4HB) for the ubiquinone pathway.</text>
</comment>
<comment type="catalytic activity">
    <reaction evidence="1">
        <text>chorismate = 4-hydroxybenzoate + pyruvate</text>
        <dbReference type="Rhea" id="RHEA:16505"/>
        <dbReference type="ChEBI" id="CHEBI:15361"/>
        <dbReference type="ChEBI" id="CHEBI:17879"/>
        <dbReference type="ChEBI" id="CHEBI:29748"/>
        <dbReference type="EC" id="4.1.3.40"/>
    </reaction>
</comment>
<comment type="pathway">
    <text evidence="1">Cofactor biosynthesis; ubiquinone biosynthesis.</text>
</comment>
<comment type="subcellular location">
    <subcellularLocation>
        <location evidence="1">Cytoplasm</location>
    </subcellularLocation>
</comment>
<comment type="similarity">
    <text evidence="1">Belongs to the UbiC family.</text>
</comment>
<name>UBIC_SHELP</name>
<feature type="chain" id="PRO_0000292079" description="Probable chorismate pyruvate-lyase">
    <location>
        <begin position="1"/>
        <end position="188"/>
    </location>
</feature>
<feature type="binding site" evidence="1">
    <location>
        <position position="77"/>
    </location>
    <ligand>
        <name>substrate</name>
    </ligand>
</feature>
<feature type="binding site" evidence="1">
    <location>
        <position position="115"/>
    </location>
    <ligand>
        <name>substrate</name>
    </ligand>
</feature>
<feature type="binding site" evidence="1">
    <location>
        <position position="174"/>
    </location>
    <ligand>
        <name>substrate</name>
    </ligand>
</feature>
<gene>
    <name evidence="1" type="primary">ubiC</name>
    <name type="ordered locus">Shew_3743</name>
</gene>
<keyword id="KW-0963">Cytoplasm</keyword>
<keyword id="KW-0456">Lyase</keyword>
<keyword id="KW-0670">Pyruvate</keyword>
<keyword id="KW-1185">Reference proteome</keyword>
<keyword id="KW-0831">Ubiquinone biosynthesis</keyword>
<proteinExistence type="inferred from homology"/>
<protein>
    <recommendedName>
        <fullName evidence="1">Probable chorismate pyruvate-lyase</fullName>
        <shortName evidence="1">CL</shortName>
        <shortName evidence="1">CPL</shortName>
        <ecNumber evidence="1">4.1.3.40</ecNumber>
    </recommendedName>
</protein>
<sequence length="188" mass="21151">MSVTRLSFPYGESIQWHSPDQIPQLPPSPFREWLLASGSLTQKLKSHCNQFEVKVLGEAMLPPFPGELPHQGQAWIREVLLCLDGIPWVFARTLVPGAMMDSAQDNFLSLGTRPLGELLFTSGDFTPGKIEVGEFTACDSLAKLIDSLEQESHHPLWGRRRYFSHGDQQLIVSEIFLPKARQLIDRLA</sequence>
<organism>
    <name type="scientific">Shewanella loihica (strain ATCC BAA-1088 / PV-4)</name>
    <dbReference type="NCBI Taxonomy" id="323850"/>
    <lineage>
        <taxon>Bacteria</taxon>
        <taxon>Pseudomonadati</taxon>
        <taxon>Pseudomonadota</taxon>
        <taxon>Gammaproteobacteria</taxon>
        <taxon>Alteromonadales</taxon>
        <taxon>Shewanellaceae</taxon>
        <taxon>Shewanella</taxon>
    </lineage>
</organism>
<evidence type="ECO:0000255" key="1">
    <source>
        <dbReference type="HAMAP-Rule" id="MF_01632"/>
    </source>
</evidence>